<organism>
    <name type="scientific">Ruegeria pomeroyi (strain ATCC 700808 / DSM 15171 / DSS-3)</name>
    <name type="common">Silicibacter pomeroyi</name>
    <dbReference type="NCBI Taxonomy" id="246200"/>
    <lineage>
        <taxon>Bacteria</taxon>
        <taxon>Pseudomonadati</taxon>
        <taxon>Pseudomonadota</taxon>
        <taxon>Alphaproteobacteria</taxon>
        <taxon>Rhodobacterales</taxon>
        <taxon>Roseobacteraceae</taxon>
        <taxon>Ruegeria</taxon>
    </lineage>
</organism>
<feature type="chain" id="PRO_0000163350" description="Ribosome maturation factor RimM">
    <location>
        <begin position="1"/>
        <end position="167"/>
    </location>
</feature>
<feature type="domain" description="PRC barrel" evidence="1">
    <location>
        <begin position="92"/>
        <end position="166"/>
    </location>
</feature>
<gene>
    <name evidence="1" type="primary">rimM</name>
    <name type="ordered locus">SPO3255</name>
</gene>
<name>RIMM_RUEPO</name>
<evidence type="ECO:0000255" key="1">
    <source>
        <dbReference type="HAMAP-Rule" id="MF_00014"/>
    </source>
</evidence>
<proteinExistence type="inferred from homology"/>
<comment type="function">
    <text evidence="1">An accessory protein needed during the final step in the assembly of 30S ribosomal subunit, possibly for assembly of the head region. Essential for efficient processing of 16S rRNA. May be needed both before and after RbfA during the maturation of 16S rRNA. It has affinity for free ribosomal 30S subunits but not for 70S ribosomes.</text>
</comment>
<comment type="subunit">
    <text evidence="1">Binds ribosomal protein uS19.</text>
</comment>
<comment type="subcellular location">
    <subcellularLocation>
        <location evidence="1">Cytoplasm</location>
    </subcellularLocation>
</comment>
<comment type="domain">
    <text evidence="1">The PRC barrel domain binds ribosomal protein uS19.</text>
</comment>
<comment type="similarity">
    <text evidence="1">Belongs to the RimM family.</text>
</comment>
<dbReference type="EMBL" id="CP000031">
    <property type="protein sequence ID" value="AAV96490.1"/>
    <property type="molecule type" value="Genomic_DNA"/>
</dbReference>
<dbReference type="RefSeq" id="WP_011048945.1">
    <property type="nucleotide sequence ID" value="NC_003911.12"/>
</dbReference>
<dbReference type="SMR" id="Q5LNF0"/>
<dbReference type="STRING" id="246200.SPO3255"/>
<dbReference type="PaxDb" id="246200-SPO3255"/>
<dbReference type="KEGG" id="sil:SPO3255"/>
<dbReference type="eggNOG" id="COG0806">
    <property type="taxonomic scope" value="Bacteria"/>
</dbReference>
<dbReference type="HOGENOM" id="CLU_077636_0_1_5"/>
<dbReference type="OrthoDB" id="9788191at2"/>
<dbReference type="Proteomes" id="UP000001023">
    <property type="component" value="Chromosome"/>
</dbReference>
<dbReference type="GO" id="GO:0005737">
    <property type="term" value="C:cytoplasm"/>
    <property type="evidence" value="ECO:0007669"/>
    <property type="project" value="UniProtKB-SubCell"/>
</dbReference>
<dbReference type="GO" id="GO:0005840">
    <property type="term" value="C:ribosome"/>
    <property type="evidence" value="ECO:0007669"/>
    <property type="project" value="InterPro"/>
</dbReference>
<dbReference type="GO" id="GO:0043022">
    <property type="term" value="F:ribosome binding"/>
    <property type="evidence" value="ECO:0007669"/>
    <property type="project" value="InterPro"/>
</dbReference>
<dbReference type="GO" id="GO:0042274">
    <property type="term" value="P:ribosomal small subunit biogenesis"/>
    <property type="evidence" value="ECO:0007669"/>
    <property type="project" value="UniProtKB-UniRule"/>
</dbReference>
<dbReference type="GO" id="GO:0006364">
    <property type="term" value="P:rRNA processing"/>
    <property type="evidence" value="ECO:0007669"/>
    <property type="project" value="UniProtKB-UniRule"/>
</dbReference>
<dbReference type="Gene3D" id="2.30.30.240">
    <property type="entry name" value="PRC-barrel domain"/>
    <property type="match status" value="1"/>
</dbReference>
<dbReference type="Gene3D" id="2.40.30.60">
    <property type="entry name" value="RimM"/>
    <property type="match status" value="1"/>
</dbReference>
<dbReference type="HAMAP" id="MF_00014">
    <property type="entry name" value="Ribosome_mat_RimM"/>
    <property type="match status" value="1"/>
</dbReference>
<dbReference type="InterPro" id="IPR011033">
    <property type="entry name" value="PRC_barrel-like_sf"/>
</dbReference>
<dbReference type="InterPro" id="IPR056792">
    <property type="entry name" value="PRC_RimM"/>
</dbReference>
<dbReference type="InterPro" id="IPR011961">
    <property type="entry name" value="RimM"/>
</dbReference>
<dbReference type="InterPro" id="IPR002676">
    <property type="entry name" value="RimM_N"/>
</dbReference>
<dbReference type="InterPro" id="IPR036976">
    <property type="entry name" value="RimM_N_sf"/>
</dbReference>
<dbReference type="InterPro" id="IPR009000">
    <property type="entry name" value="Transl_B-barrel_sf"/>
</dbReference>
<dbReference type="NCBIfam" id="TIGR02273">
    <property type="entry name" value="16S_RimM"/>
    <property type="match status" value="1"/>
</dbReference>
<dbReference type="PANTHER" id="PTHR33692">
    <property type="entry name" value="RIBOSOME MATURATION FACTOR RIMM"/>
    <property type="match status" value="1"/>
</dbReference>
<dbReference type="PANTHER" id="PTHR33692:SF1">
    <property type="entry name" value="RIBOSOME MATURATION FACTOR RIMM"/>
    <property type="match status" value="1"/>
</dbReference>
<dbReference type="Pfam" id="PF24986">
    <property type="entry name" value="PRC_RimM"/>
    <property type="match status" value="1"/>
</dbReference>
<dbReference type="Pfam" id="PF01782">
    <property type="entry name" value="RimM"/>
    <property type="match status" value="1"/>
</dbReference>
<dbReference type="SUPFAM" id="SSF50346">
    <property type="entry name" value="PRC-barrel domain"/>
    <property type="match status" value="1"/>
</dbReference>
<dbReference type="SUPFAM" id="SSF50447">
    <property type="entry name" value="Translation proteins"/>
    <property type="match status" value="1"/>
</dbReference>
<sequence>MSDLICVGSVAGSFGVRGEVRLKSFCAVPEDIEMYSPLTDESGTARYPIVLTRAIKNGFAAHLGGVETKEEADALKGLRLYTQRDRLPSLPDDEFYHTDLIGLEVFDTGGTLLGKVISVQNHGAADLLEIGGAGLKSPVLLPFTQAAVPTVDLEQRRIVADPPEGLF</sequence>
<reference key="1">
    <citation type="journal article" date="2004" name="Nature">
        <title>Genome sequence of Silicibacter pomeroyi reveals adaptations to the marine environment.</title>
        <authorList>
            <person name="Moran M.A."/>
            <person name="Buchan A."/>
            <person name="Gonzalez J.M."/>
            <person name="Heidelberg J.F."/>
            <person name="Whitman W.B."/>
            <person name="Kiene R.P."/>
            <person name="Henriksen J.R."/>
            <person name="King G.M."/>
            <person name="Belas R."/>
            <person name="Fuqua C."/>
            <person name="Brinkac L.M."/>
            <person name="Lewis M."/>
            <person name="Johri S."/>
            <person name="Weaver B."/>
            <person name="Pai G."/>
            <person name="Eisen J.A."/>
            <person name="Rahe E."/>
            <person name="Sheldon W.M."/>
            <person name="Ye W."/>
            <person name="Miller T.R."/>
            <person name="Carlton J."/>
            <person name="Rasko D.A."/>
            <person name="Paulsen I.T."/>
            <person name="Ren Q."/>
            <person name="Daugherty S.C."/>
            <person name="DeBoy R.T."/>
            <person name="Dodson R.J."/>
            <person name="Durkin A.S."/>
            <person name="Madupu R."/>
            <person name="Nelson W.C."/>
            <person name="Sullivan S.A."/>
            <person name="Rosovitz M.J."/>
            <person name="Haft D.H."/>
            <person name="Selengut J."/>
            <person name="Ward N."/>
        </authorList>
    </citation>
    <scope>NUCLEOTIDE SEQUENCE [LARGE SCALE GENOMIC DNA]</scope>
    <source>
        <strain>ATCC 700808 / DSM 15171 / DSS-3</strain>
    </source>
</reference>
<reference key="2">
    <citation type="journal article" date="2014" name="Stand. Genomic Sci.">
        <title>An updated genome annotation for the model marine bacterium Ruegeria pomeroyi DSS-3.</title>
        <authorList>
            <person name="Rivers A.R."/>
            <person name="Smith C.B."/>
            <person name="Moran M.A."/>
        </authorList>
    </citation>
    <scope>GENOME REANNOTATION</scope>
    <source>
        <strain>ATCC 700808 / DSM 15171 / DSS-3</strain>
    </source>
</reference>
<keyword id="KW-0143">Chaperone</keyword>
<keyword id="KW-0963">Cytoplasm</keyword>
<keyword id="KW-1185">Reference proteome</keyword>
<keyword id="KW-0690">Ribosome biogenesis</keyword>
<keyword id="KW-0698">rRNA processing</keyword>
<protein>
    <recommendedName>
        <fullName evidence="1">Ribosome maturation factor RimM</fullName>
    </recommendedName>
</protein>
<accession>Q5LNF0</accession>